<name>DUT_ADEG8</name>
<keyword id="KW-0378">Hydrolase</keyword>
<keyword id="KW-0460">Magnesium</keyword>
<keyword id="KW-0479">Metal-binding</keyword>
<keyword id="KW-0546">Nucleotide metabolism</keyword>
<proteinExistence type="inferred from homology"/>
<sequence length="163" mass="17426">MSFDSGCPPTPPVKLLFKKHSPFAVTPQRATSGAAGYDLCSSADVVVPPKSRSLIPTDLSFQFPRGVYGRIAPRSGLAVKFFIDVGAGVIDSDYRGIVSVLLFNFSDHNFNVRRGDRIAQLILERHLTPDLEERSGLDETARGAAGFGSTGGFDTGVCPSSFS</sequence>
<dbReference type="EC" id="3.6.1.23"/>
<dbReference type="EMBL" id="AF021253">
    <property type="protein sequence ID" value="AAC71662.1"/>
    <property type="molecule type" value="Genomic_DNA"/>
</dbReference>
<dbReference type="SMR" id="Q9YYS0"/>
<dbReference type="UniPathway" id="UPA00610">
    <property type="reaction ID" value="UER00666"/>
</dbReference>
<dbReference type="GO" id="GO:0004170">
    <property type="term" value="F:dUTP diphosphatase activity"/>
    <property type="evidence" value="ECO:0007669"/>
    <property type="project" value="UniProtKB-EC"/>
</dbReference>
<dbReference type="GO" id="GO:0000287">
    <property type="term" value="F:magnesium ion binding"/>
    <property type="evidence" value="ECO:0007669"/>
    <property type="project" value="InterPro"/>
</dbReference>
<dbReference type="GO" id="GO:0006226">
    <property type="term" value="P:dUMP biosynthetic process"/>
    <property type="evidence" value="ECO:0007669"/>
    <property type="project" value="UniProtKB-UniPathway"/>
</dbReference>
<dbReference type="GO" id="GO:0046081">
    <property type="term" value="P:dUTP catabolic process"/>
    <property type="evidence" value="ECO:0007669"/>
    <property type="project" value="InterPro"/>
</dbReference>
<dbReference type="CDD" id="cd07557">
    <property type="entry name" value="trimeric_dUTPase"/>
    <property type="match status" value="1"/>
</dbReference>
<dbReference type="Gene3D" id="2.70.40.10">
    <property type="match status" value="1"/>
</dbReference>
<dbReference type="InterPro" id="IPR008181">
    <property type="entry name" value="dUTPase"/>
</dbReference>
<dbReference type="InterPro" id="IPR029054">
    <property type="entry name" value="dUTPase-like"/>
</dbReference>
<dbReference type="InterPro" id="IPR036157">
    <property type="entry name" value="dUTPase-like_sf"/>
</dbReference>
<dbReference type="InterPro" id="IPR033704">
    <property type="entry name" value="dUTPase_trimeric"/>
</dbReference>
<dbReference type="NCBIfam" id="TIGR00576">
    <property type="entry name" value="dut"/>
    <property type="match status" value="1"/>
</dbReference>
<dbReference type="NCBIfam" id="NF001862">
    <property type="entry name" value="PRK00601.1"/>
    <property type="match status" value="1"/>
</dbReference>
<dbReference type="PANTHER" id="PTHR11241">
    <property type="entry name" value="DEOXYURIDINE 5'-TRIPHOSPHATE NUCLEOTIDOHYDROLASE"/>
    <property type="match status" value="1"/>
</dbReference>
<dbReference type="PANTHER" id="PTHR11241:SF0">
    <property type="entry name" value="DEOXYURIDINE 5'-TRIPHOSPHATE NUCLEOTIDOHYDROLASE"/>
    <property type="match status" value="1"/>
</dbReference>
<dbReference type="Pfam" id="PF00692">
    <property type="entry name" value="dUTPase"/>
    <property type="match status" value="1"/>
</dbReference>
<dbReference type="SUPFAM" id="SSF51283">
    <property type="entry name" value="dUTPase-like"/>
    <property type="match status" value="1"/>
</dbReference>
<accession>Q9YYS0</accession>
<reference key="1">
    <citation type="journal article" date="1998" name="J. Gen. Virol.">
        <title>Sequence and transcriptional analysis of terminal regions of the fowl adenovirus type 8 genome.</title>
        <authorList>
            <person name="Cao J.X."/>
            <person name="Krell P.J."/>
            <person name="Nagy E."/>
        </authorList>
    </citation>
    <scope>NUCLEOTIDE SEQUENCE [GENOMIC DNA]</scope>
</reference>
<comment type="function">
    <text evidence="1">This enzyme is involved in nucleotide metabolism: it produces dUMP, the immediate precursor of thymidine nucleotides and it decreases the intracellular concentration of dUTP so that uracil cannot be incorporated into DNA.</text>
</comment>
<comment type="catalytic activity">
    <reaction>
        <text>dUTP + H2O = dUMP + diphosphate + H(+)</text>
        <dbReference type="Rhea" id="RHEA:10248"/>
        <dbReference type="ChEBI" id="CHEBI:15377"/>
        <dbReference type="ChEBI" id="CHEBI:15378"/>
        <dbReference type="ChEBI" id="CHEBI:33019"/>
        <dbReference type="ChEBI" id="CHEBI:61555"/>
        <dbReference type="ChEBI" id="CHEBI:246422"/>
        <dbReference type="EC" id="3.6.1.23"/>
    </reaction>
</comment>
<comment type="cofactor">
    <cofactor evidence="1">
        <name>Mg(2+)</name>
        <dbReference type="ChEBI" id="CHEBI:18420"/>
    </cofactor>
</comment>
<comment type="pathway">
    <text>Pyrimidine metabolism; dUMP biosynthesis; dUMP from dCTP (dUTP route): step 2/2.</text>
</comment>
<comment type="similarity">
    <text evidence="2">Belongs to the dUTPase family.</text>
</comment>
<feature type="chain" id="PRO_0000182968" description="Deoxyuridine 5'-triphosphate nucleotidohydrolase">
    <location>
        <begin position="1"/>
        <end position="163"/>
    </location>
</feature>
<protein>
    <recommendedName>
        <fullName>Deoxyuridine 5'-triphosphate nucleotidohydrolase</fullName>
        <shortName>dUTPase</shortName>
        <ecNumber>3.6.1.23</ecNumber>
    </recommendedName>
    <alternativeName>
        <fullName>dUTP pyrophosphatase</fullName>
    </alternativeName>
</protein>
<organismHost>
    <name type="scientific">Galliformes</name>
    <dbReference type="NCBI Taxonomy" id="8976"/>
</organismHost>
<organism>
    <name type="scientific">Avian adenovirus 8 (strain ATCC A-2A)</name>
    <name type="common">FAdV-8</name>
    <name type="synonym">Fowl adenovirus 8</name>
    <dbReference type="NCBI Taxonomy" id="66295"/>
    <lineage>
        <taxon>Viruses</taxon>
        <taxon>Varidnaviria</taxon>
        <taxon>Bamfordvirae</taxon>
        <taxon>Preplasmiviricota</taxon>
        <taxon>Tectiliviricetes</taxon>
        <taxon>Rowavirales</taxon>
        <taxon>Adenoviridae</taxon>
        <taxon>Aviadenovirus</taxon>
        <taxon>Fowl aviadenovirus E</taxon>
    </lineage>
</organism>
<evidence type="ECO:0000250" key="1"/>
<evidence type="ECO:0000305" key="2"/>